<evidence type="ECO:0000255" key="1">
    <source>
        <dbReference type="HAMAP-Rule" id="MF_01331"/>
    </source>
</evidence>
<evidence type="ECO:0000305" key="2"/>
<gene>
    <name evidence="1" type="primary">rplV</name>
    <name type="ordered locus">FTN_0244</name>
</gene>
<proteinExistence type="inferred from homology"/>
<accession>A0Q4I8</accession>
<dbReference type="EMBL" id="CP000439">
    <property type="protein sequence ID" value="ABK89153.1"/>
    <property type="molecule type" value="Genomic_DNA"/>
</dbReference>
<dbReference type="RefSeq" id="WP_003027193.1">
    <property type="nucleotide sequence ID" value="NZ_CP009633.1"/>
</dbReference>
<dbReference type="SMR" id="A0Q4I8"/>
<dbReference type="GeneID" id="75264256"/>
<dbReference type="KEGG" id="ftn:FTN_0244"/>
<dbReference type="KEGG" id="ftx:AW25_1798"/>
<dbReference type="BioCyc" id="FTUL401614:G1G75-255-MONOMER"/>
<dbReference type="Proteomes" id="UP000000762">
    <property type="component" value="Chromosome"/>
</dbReference>
<dbReference type="GO" id="GO:0022625">
    <property type="term" value="C:cytosolic large ribosomal subunit"/>
    <property type="evidence" value="ECO:0007669"/>
    <property type="project" value="TreeGrafter"/>
</dbReference>
<dbReference type="GO" id="GO:0019843">
    <property type="term" value="F:rRNA binding"/>
    <property type="evidence" value="ECO:0007669"/>
    <property type="project" value="UniProtKB-UniRule"/>
</dbReference>
<dbReference type="GO" id="GO:0003735">
    <property type="term" value="F:structural constituent of ribosome"/>
    <property type="evidence" value="ECO:0007669"/>
    <property type="project" value="InterPro"/>
</dbReference>
<dbReference type="GO" id="GO:0006412">
    <property type="term" value="P:translation"/>
    <property type="evidence" value="ECO:0007669"/>
    <property type="project" value="UniProtKB-UniRule"/>
</dbReference>
<dbReference type="CDD" id="cd00336">
    <property type="entry name" value="Ribosomal_L22"/>
    <property type="match status" value="1"/>
</dbReference>
<dbReference type="FunFam" id="3.90.470.10:FF:000001">
    <property type="entry name" value="50S ribosomal protein L22"/>
    <property type="match status" value="1"/>
</dbReference>
<dbReference type="Gene3D" id="3.90.470.10">
    <property type="entry name" value="Ribosomal protein L22/L17"/>
    <property type="match status" value="1"/>
</dbReference>
<dbReference type="HAMAP" id="MF_01331_B">
    <property type="entry name" value="Ribosomal_uL22_B"/>
    <property type="match status" value="1"/>
</dbReference>
<dbReference type="InterPro" id="IPR001063">
    <property type="entry name" value="Ribosomal_uL22"/>
</dbReference>
<dbReference type="InterPro" id="IPR005727">
    <property type="entry name" value="Ribosomal_uL22_bac/chlpt-type"/>
</dbReference>
<dbReference type="InterPro" id="IPR047867">
    <property type="entry name" value="Ribosomal_uL22_bac/org-type"/>
</dbReference>
<dbReference type="InterPro" id="IPR018260">
    <property type="entry name" value="Ribosomal_uL22_CS"/>
</dbReference>
<dbReference type="InterPro" id="IPR036394">
    <property type="entry name" value="Ribosomal_uL22_sf"/>
</dbReference>
<dbReference type="NCBIfam" id="TIGR01044">
    <property type="entry name" value="rplV_bact"/>
    <property type="match status" value="1"/>
</dbReference>
<dbReference type="PANTHER" id="PTHR13501">
    <property type="entry name" value="CHLOROPLAST 50S RIBOSOMAL PROTEIN L22-RELATED"/>
    <property type="match status" value="1"/>
</dbReference>
<dbReference type="PANTHER" id="PTHR13501:SF8">
    <property type="entry name" value="LARGE RIBOSOMAL SUBUNIT PROTEIN UL22M"/>
    <property type="match status" value="1"/>
</dbReference>
<dbReference type="Pfam" id="PF00237">
    <property type="entry name" value="Ribosomal_L22"/>
    <property type="match status" value="1"/>
</dbReference>
<dbReference type="SUPFAM" id="SSF54843">
    <property type="entry name" value="Ribosomal protein L22"/>
    <property type="match status" value="1"/>
</dbReference>
<dbReference type="PROSITE" id="PS00464">
    <property type="entry name" value="RIBOSOMAL_L22"/>
    <property type="match status" value="1"/>
</dbReference>
<name>RL22_FRATN</name>
<keyword id="KW-0687">Ribonucleoprotein</keyword>
<keyword id="KW-0689">Ribosomal protein</keyword>
<keyword id="KW-0694">RNA-binding</keyword>
<keyword id="KW-0699">rRNA-binding</keyword>
<comment type="function">
    <text evidence="1">This protein binds specifically to 23S rRNA; its binding is stimulated by other ribosomal proteins, e.g. L4, L17, and L20. It is important during the early stages of 50S assembly. It makes multiple contacts with different domains of the 23S rRNA in the assembled 50S subunit and ribosome (By similarity).</text>
</comment>
<comment type="function">
    <text evidence="1">The globular domain of the protein is located near the polypeptide exit tunnel on the outside of the subunit, while an extended beta-hairpin is found that lines the wall of the exit tunnel in the center of the 70S ribosome.</text>
</comment>
<comment type="subunit">
    <text evidence="1">Part of the 50S ribosomal subunit.</text>
</comment>
<comment type="similarity">
    <text evidence="1">Belongs to the universal ribosomal protein uL22 family.</text>
</comment>
<feature type="chain" id="PRO_1000052574" description="Large ribosomal subunit protein uL22">
    <location>
        <begin position="1"/>
        <end position="111"/>
    </location>
</feature>
<organism>
    <name type="scientific">Francisella tularensis subsp. novicida (strain U112)</name>
    <dbReference type="NCBI Taxonomy" id="401614"/>
    <lineage>
        <taxon>Bacteria</taxon>
        <taxon>Pseudomonadati</taxon>
        <taxon>Pseudomonadota</taxon>
        <taxon>Gammaproteobacteria</taxon>
        <taxon>Thiotrichales</taxon>
        <taxon>Francisellaceae</taxon>
        <taxon>Francisella</taxon>
    </lineage>
</organism>
<reference key="1">
    <citation type="journal article" date="2007" name="Genome Biol.">
        <title>Comparison of Francisella tularensis genomes reveals evolutionary events associated with the emergence of human pathogenic strains.</title>
        <authorList>
            <person name="Rohmer L."/>
            <person name="Fong C."/>
            <person name="Abmayr S."/>
            <person name="Wasnick M."/>
            <person name="Larson Freeman T.J."/>
            <person name="Radey M."/>
            <person name="Guina T."/>
            <person name="Svensson K."/>
            <person name="Hayden H.S."/>
            <person name="Jacobs M."/>
            <person name="Gallagher L.A."/>
            <person name="Manoil C."/>
            <person name="Ernst R.K."/>
            <person name="Drees B."/>
            <person name="Buckley D."/>
            <person name="Haugen E."/>
            <person name="Bovee D."/>
            <person name="Zhou Y."/>
            <person name="Chang J."/>
            <person name="Levy R."/>
            <person name="Lim R."/>
            <person name="Gillett W."/>
            <person name="Guenthener D."/>
            <person name="Kang A."/>
            <person name="Shaffer S.A."/>
            <person name="Taylor G."/>
            <person name="Chen J."/>
            <person name="Gallis B."/>
            <person name="D'Argenio D.A."/>
            <person name="Forsman M."/>
            <person name="Olson M.V."/>
            <person name="Goodlett D.R."/>
            <person name="Kaul R."/>
            <person name="Miller S.I."/>
            <person name="Brittnacher M.J."/>
        </authorList>
    </citation>
    <scope>NUCLEOTIDE SEQUENCE [LARGE SCALE GENOMIC DNA]</scope>
    <source>
        <strain>U112</strain>
    </source>
</reference>
<sequence length="111" mass="12201">MEVQAKLKFARISAQKCRLVADQIRGLPVEQAINLLTFSNKKAAVLIKGVLNSAVANAEHNDGMDVDSLVVSTIFVDEGPTMKRFEARAKGRGNRILKRTSHITVKVAEKK</sequence>
<protein>
    <recommendedName>
        <fullName evidence="1">Large ribosomal subunit protein uL22</fullName>
    </recommendedName>
    <alternativeName>
        <fullName evidence="2">50S ribosomal protein L22</fullName>
    </alternativeName>
</protein>